<feature type="chain" id="PRO_0000427530" description="Uncharacterized protein MT2673.1">
    <location>
        <begin position="1"/>
        <end position="164"/>
    </location>
</feature>
<protein>
    <recommendedName>
        <fullName>Uncharacterized protein MT2673.1</fullName>
    </recommendedName>
</protein>
<organism>
    <name type="scientific">Mycobacterium tuberculosis (strain CDC 1551 / Oshkosh)</name>
    <dbReference type="NCBI Taxonomy" id="83331"/>
    <lineage>
        <taxon>Bacteria</taxon>
        <taxon>Bacillati</taxon>
        <taxon>Actinomycetota</taxon>
        <taxon>Actinomycetes</taxon>
        <taxon>Mycobacteriales</taxon>
        <taxon>Mycobacteriaceae</taxon>
        <taxon>Mycobacterium</taxon>
        <taxon>Mycobacterium tuberculosis complex</taxon>
    </lineage>
</organism>
<name>Y2598_MYCTO</name>
<sequence length="164" mass="17616">MPLHQLAIAPVDVSGALLGLVLNAPAPRPLATHRLAHTDGSALQLGVLGASHVVTVEGRFCEEVSCVARSRGGDLPESTHAPGYHLQSHTETHDEAAFRRLARHLRERCTRATGWLGGVFPGDDAALTALAAEPDGTGWRWRTWHLYPSASGGTVVHTTSRWRP</sequence>
<gene>
    <name type="ordered locus">MT2673.1</name>
</gene>
<proteinExistence type="predicted"/>
<dbReference type="EMBL" id="AE000516">
    <property type="protein sequence ID" value="AAK46988.1"/>
    <property type="status" value="ALT_INIT"/>
    <property type="molecule type" value="Genomic_DNA"/>
</dbReference>
<dbReference type="PIR" id="E70727">
    <property type="entry name" value="E70727"/>
</dbReference>
<dbReference type="RefSeq" id="WP_003413444.1">
    <property type="nucleotide sequence ID" value="NZ_KK341227.1"/>
</dbReference>
<dbReference type="KEGG" id="mtc:MT2673.1"/>
<dbReference type="PATRIC" id="fig|83331.31.peg.2882"/>
<dbReference type="HOGENOM" id="CLU_100609_1_0_11"/>
<dbReference type="Proteomes" id="UP000001020">
    <property type="component" value="Chromosome"/>
</dbReference>
<dbReference type="InterPro" id="IPR024486">
    <property type="entry name" value="DUF2617"/>
</dbReference>
<dbReference type="Pfam" id="PF10936">
    <property type="entry name" value="DUF2617"/>
    <property type="match status" value="1"/>
</dbReference>
<reference key="1">
    <citation type="journal article" date="2002" name="J. Bacteriol.">
        <title>Whole-genome comparison of Mycobacterium tuberculosis clinical and laboratory strains.</title>
        <authorList>
            <person name="Fleischmann R.D."/>
            <person name="Alland D."/>
            <person name="Eisen J.A."/>
            <person name="Carpenter L."/>
            <person name="White O."/>
            <person name="Peterson J.D."/>
            <person name="DeBoy R.T."/>
            <person name="Dodson R.J."/>
            <person name="Gwinn M.L."/>
            <person name="Haft D.H."/>
            <person name="Hickey E.K."/>
            <person name="Kolonay J.F."/>
            <person name="Nelson W.C."/>
            <person name="Umayam L.A."/>
            <person name="Ermolaeva M.D."/>
            <person name="Salzberg S.L."/>
            <person name="Delcher A."/>
            <person name="Utterback T.R."/>
            <person name="Weidman J.F."/>
            <person name="Khouri H.M."/>
            <person name="Gill J."/>
            <person name="Mikula A."/>
            <person name="Bishai W."/>
            <person name="Jacobs W.R. Jr."/>
            <person name="Venter J.C."/>
            <person name="Fraser C.M."/>
        </authorList>
    </citation>
    <scope>NUCLEOTIDE SEQUENCE [LARGE SCALE GENOMIC DNA]</scope>
    <source>
        <strain>CDC 1551 / Oshkosh</strain>
    </source>
</reference>
<accession>P9WL70</accession>
<accession>L0TBR0</accession>
<accession>P65031</accession>
<accession>Q50623</accession>
<evidence type="ECO:0000305" key="1"/>
<keyword id="KW-1185">Reference proteome</keyword>
<comment type="sequence caution" evidence="1">
    <conflict type="erroneous initiation">
        <sequence resource="EMBL-CDS" id="AAK46988"/>
    </conflict>
</comment>